<evidence type="ECO:0000255" key="1">
    <source>
        <dbReference type="HAMAP-Rule" id="MF_01411"/>
    </source>
</evidence>
<evidence type="ECO:0000256" key="2">
    <source>
        <dbReference type="SAM" id="MobiDB-lite"/>
    </source>
</evidence>
<comment type="function">
    <text evidence="1">Together with LptE, is involved in the assembly of lipopolysaccharide (LPS) at the surface of the outer membrane.</text>
</comment>
<comment type="subunit">
    <text evidence="1">Component of the lipopolysaccharide transport and assembly complex. Interacts with LptE and LptA.</text>
</comment>
<comment type="subcellular location">
    <subcellularLocation>
        <location evidence="1">Cell outer membrane</location>
    </subcellularLocation>
</comment>
<comment type="similarity">
    <text evidence="1">Belongs to the LptD family.</text>
</comment>
<feature type="signal peptide" evidence="1">
    <location>
        <begin position="1"/>
        <end position="33"/>
    </location>
</feature>
<feature type="chain" id="PRO_5000305065" description="LPS-assembly protein LptD">
    <location>
        <begin position="34"/>
        <end position="932"/>
    </location>
</feature>
<feature type="region of interest" description="Disordered" evidence="2">
    <location>
        <begin position="54"/>
        <end position="87"/>
    </location>
</feature>
<accession>B0KJ96</accession>
<name>LPTD_PSEPG</name>
<proteinExistence type="inferred from homology"/>
<keyword id="KW-0998">Cell outer membrane</keyword>
<keyword id="KW-0472">Membrane</keyword>
<keyword id="KW-0732">Signal</keyword>
<sequence>MALKSPAFRRKFPLLVTGGLLALQPLATSYAVAAEQFDCQVSAAGGWDCKPKAPVNNLPPRPVHEGAAVSSGTEAASEGETADRPMLVTEAKGRALKSRSEDYSHLDWVPREKLTAAQLAETGPYCGGAYVEPTRPGMADTTPKDESPTYINAKVSKYQQEQQIATLAGDVVMRQGSMQAEADEANLYQTENRGELKGNVKIRDNGSLVVGDEAQIQLDTGEAQVDNAEYVMHKSHIRGSALYAKRGENAIIRLKDGTYTTCEPGSNAWQLKGNNITLNPATGFGTATNVTLRVKDFPVFYTPYIYFPIDDRRQSGFLPPSFSTSSDTGFMLVTPYYFNLAPNYDATLYPRYMAKRGLLMEGEFRYLTPSSEGQFGGAYLNDKDDDRKEQTDYKDQRWMVNWQHKGGLDERLMTEVDYTDISDPFYFQDLESDQIGVESRDLLNQQGALTYRGDNYTARLNVHAYEMATISQITPYDRLPQITLNGVLPYNPGGLVMGYESEAVRFDRDLKDDFVRDKDGNPDFSAGAAGRRLDQNVSGIARANGNRFNVAPSISLPMEASYGYLTPKLKYAYTHYDLDLDSQGKAQAIAQSANPAYGSYNSSLNRDVPIFSVDSGLYFDRNTSLFGTNYKQTLEPRLFYLNVPYKDQRDIPIFDSSETLFSYDSLFRDNRFSGTDRIGDENKLSLGVTTRWIEDNGFERQNFSIGQAYYFKDRKVQLPGIYYKDRQSAQSDTSPYALVYNYYFNRDWRFNSDFNWDPDSRSTRSGSAMFHYQPEDNPNKVVNLGYRYRNDTIIYDSTTGTWKEGGSYGNPGDPNYIKDYYKIQQHDFSVIWPIVPQWSVIARWQHDYNRNRTLEAMGGFEYDNCCWKLRLINRYWIDYDDFSQALPANEKGDHGVFLQIVLKGLGGVVGNKVESFLDQGIQGYREREDQAY</sequence>
<organism>
    <name type="scientific">Pseudomonas putida (strain GB-1)</name>
    <dbReference type="NCBI Taxonomy" id="76869"/>
    <lineage>
        <taxon>Bacteria</taxon>
        <taxon>Pseudomonadati</taxon>
        <taxon>Pseudomonadota</taxon>
        <taxon>Gammaproteobacteria</taxon>
        <taxon>Pseudomonadales</taxon>
        <taxon>Pseudomonadaceae</taxon>
        <taxon>Pseudomonas</taxon>
    </lineage>
</organism>
<dbReference type="EMBL" id="CP000926">
    <property type="protein sequence ID" value="ABY96346.1"/>
    <property type="molecule type" value="Genomic_DNA"/>
</dbReference>
<dbReference type="RefSeq" id="WP_012270202.1">
    <property type="nucleotide sequence ID" value="NC_010322.1"/>
</dbReference>
<dbReference type="SMR" id="B0KJ96"/>
<dbReference type="KEGG" id="ppg:PputGB1_0435"/>
<dbReference type="eggNOG" id="COG1452">
    <property type="taxonomic scope" value="Bacteria"/>
</dbReference>
<dbReference type="HOGENOM" id="CLU_009039_1_0_6"/>
<dbReference type="Proteomes" id="UP000002157">
    <property type="component" value="Chromosome"/>
</dbReference>
<dbReference type="GO" id="GO:0009279">
    <property type="term" value="C:cell outer membrane"/>
    <property type="evidence" value="ECO:0007669"/>
    <property type="project" value="UniProtKB-SubCell"/>
</dbReference>
<dbReference type="GO" id="GO:1990351">
    <property type="term" value="C:transporter complex"/>
    <property type="evidence" value="ECO:0007669"/>
    <property type="project" value="TreeGrafter"/>
</dbReference>
<dbReference type="GO" id="GO:0043165">
    <property type="term" value="P:Gram-negative-bacterium-type cell outer membrane assembly"/>
    <property type="evidence" value="ECO:0007669"/>
    <property type="project" value="UniProtKB-UniRule"/>
</dbReference>
<dbReference type="GO" id="GO:0015920">
    <property type="term" value="P:lipopolysaccharide transport"/>
    <property type="evidence" value="ECO:0007669"/>
    <property type="project" value="InterPro"/>
</dbReference>
<dbReference type="Gene3D" id="2.60.450.10">
    <property type="entry name" value="Lipopolysaccharide (LPS) transport protein A like domain"/>
    <property type="match status" value="1"/>
</dbReference>
<dbReference type="HAMAP" id="MF_01411">
    <property type="entry name" value="LPS_assembly_LptD"/>
    <property type="match status" value="1"/>
</dbReference>
<dbReference type="InterPro" id="IPR020889">
    <property type="entry name" value="LipoPS_assembly_LptD"/>
</dbReference>
<dbReference type="InterPro" id="IPR050218">
    <property type="entry name" value="LptD"/>
</dbReference>
<dbReference type="InterPro" id="IPR007543">
    <property type="entry name" value="LptD_C"/>
</dbReference>
<dbReference type="InterPro" id="IPR005653">
    <property type="entry name" value="OstA-like_N"/>
</dbReference>
<dbReference type="PANTHER" id="PTHR30189">
    <property type="entry name" value="LPS-ASSEMBLY PROTEIN"/>
    <property type="match status" value="1"/>
</dbReference>
<dbReference type="PANTHER" id="PTHR30189:SF1">
    <property type="entry name" value="LPS-ASSEMBLY PROTEIN LPTD"/>
    <property type="match status" value="1"/>
</dbReference>
<dbReference type="Pfam" id="PF04453">
    <property type="entry name" value="LptD"/>
    <property type="match status" value="1"/>
</dbReference>
<dbReference type="Pfam" id="PF03968">
    <property type="entry name" value="LptD_N"/>
    <property type="match status" value="1"/>
</dbReference>
<reference key="1">
    <citation type="submission" date="2008-01" db="EMBL/GenBank/DDBJ databases">
        <title>Complete sequence of Pseudomonas putida GB-1.</title>
        <authorList>
            <consortium name="US DOE Joint Genome Institute"/>
            <person name="Copeland A."/>
            <person name="Lucas S."/>
            <person name="Lapidus A."/>
            <person name="Barry K."/>
            <person name="Glavina del Rio T."/>
            <person name="Dalin E."/>
            <person name="Tice H."/>
            <person name="Pitluck S."/>
            <person name="Bruce D."/>
            <person name="Goodwin L."/>
            <person name="Chertkov O."/>
            <person name="Brettin T."/>
            <person name="Detter J.C."/>
            <person name="Han C."/>
            <person name="Kuske C.R."/>
            <person name="Schmutz J."/>
            <person name="Larimer F."/>
            <person name="Land M."/>
            <person name="Hauser L."/>
            <person name="Kyrpides N."/>
            <person name="Kim E."/>
            <person name="McCarthy J.K."/>
            <person name="Richardson P."/>
        </authorList>
    </citation>
    <scope>NUCLEOTIDE SEQUENCE [LARGE SCALE GENOMIC DNA]</scope>
    <source>
        <strain>GB-1</strain>
    </source>
</reference>
<protein>
    <recommendedName>
        <fullName evidence="1">LPS-assembly protein LptD</fullName>
    </recommendedName>
</protein>
<gene>
    <name evidence="1" type="primary">lptD</name>
    <name type="synonym">imp</name>
    <name type="synonym">ostA</name>
    <name type="ordered locus">PputGB1_0435</name>
</gene>